<feature type="chain" id="PRO_1000064990" description="UPF0208 membrane protein YPDSF_1972">
    <location>
        <begin position="1"/>
        <end position="151"/>
    </location>
</feature>
<feature type="transmembrane region" description="Helical" evidence="1">
    <location>
        <begin position="46"/>
        <end position="66"/>
    </location>
</feature>
<feature type="transmembrane region" description="Helical" evidence="1">
    <location>
        <begin position="69"/>
        <end position="89"/>
    </location>
</feature>
<sequence length="151" mass="17122">MTIKPSDSVSWFQVLQRGQHYMKTWPADKRLAPVFPENRVTVVTRFGIRFMPPLAIFTLTWQIALGGQLGPAIATALFACGLPLQGLWWLGKRAITPLPPTLLQWFHEVRHKLFEAGQAVAPIEPIPTYQSLADLLKRAFKQLDKTFLDDL</sequence>
<comment type="subcellular location">
    <subcellularLocation>
        <location evidence="1">Cell inner membrane</location>
        <topology evidence="1">Multi-pass membrane protein</topology>
    </subcellularLocation>
</comment>
<comment type="similarity">
    <text evidence="1">Belongs to the UPF0208 family.</text>
</comment>
<protein>
    <recommendedName>
        <fullName evidence="1">UPF0208 membrane protein YPDSF_1972</fullName>
    </recommendedName>
</protein>
<name>Y1972_YERPP</name>
<accession>A4TM43</accession>
<dbReference type="EMBL" id="CP000668">
    <property type="protein sequence ID" value="ABP40355.1"/>
    <property type="molecule type" value="Genomic_DNA"/>
</dbReference>
<dbReference type="KEGG" id="ypp:YPDSF_1972"/>
<dbReference type="PATRIC" id="fig|386656.14.peg.3439"/>
<dbReference type="GO" id="GO:0005886">
    <property type="term" value="C:plasma membrane"/>
    <property type="evidence" value="ECO:0007669"/>
    <property type="project" value="UniProtKB-SubCell"/>
</dbReference>
<dbReference type="HAMAP" id="MF_01101">
    <property type="entry name" value="UPF0208"/>
    <property type="match status" value="1"/>
</dbReference>
<dbReference type="InterPro" id="IPR007334">
    <property type="entry name" value="UPF0208"/>
</dbReference>
<dbReference type="NCBIfam" id="NF002493">
    <property type="entry name" value="PRK01816.1"/>
    <property type="match status" value="1"/>
</dbReference>
<dbReference type="Pfam" id="PF04217">
    <property type="entry name" value="DUF412"/>
    <property type="match status" value="1"/>
</dbReference>
<organism>
    <name type="scientific">Yersinia pestis (strain Pestoides F)</name>
    <dbReference type="NCBI Taxonomy" id="386656"/>
    <lineage>
        <taxon>Bacteria</taxon>
        <taxon>Pseudomonadati</taxon>
        <taxon>Pseudomonadota</taxon>
        <taxon>Gammaproteobacteria</taxon>
        <taxon>Enterobacterales</taxon>
        <taxon>Yersiniaceae</taxon>
        <taxon>Yersinia</taxon>
    </lineage>
</organism>
<proteinExistence type="inferred from homology"/>
<evidence type="ECO:0000255" key="1">
    <source>
        <dbReference type="HAMAP-Rule" id="MF_01101"/>
    </source>
</evidence>
<reference key="1">
    <citation type="submission" date="2007-02" db="EMBL/GenBank/DDBJ databases">
        <title>Complete sequence of chromosome of Yersinia pestis Pestoides F.</title>
        <authorList>
            <consortium name="US DOE Joint Genome Institute"/>
            <person name="Copeland A."/>
            <person name="Lucas S."/>
            <person name="Lapidus A."/>
            <person name="Barry K."/>
            <person name="Detter J.C."/>
            <person name="Glavina del Rio T."/>
            <person name="Hammon N."/>
            <person name="Israni S."/>
            <person name="Dalin E."/>
            <person name="Tice H."/>
            <person name="Pitluck S."/>
            <person name="Di Bartolo G."/>
            <person name="Chain P."/>
            <person name="Malfatti S."/>
            <person name="Shin M."/>
            <person name="Vergez L."/>
            <person name="Schmutz J."/>
            <person name="Larimer F."/>
            <person name="Land M."/>
            <person name="Hauser L."/>
            <person name="Worsham P."/>
            <person name="Chu M."/>
            <person name="Bearden S."/>
            <person name="Garcia E."/>
            <person name="Richardson P."/>
        </authorList>
    </citation>
    <scope>NUCLEOTIDE SEQUENCE [LARGE SCALE GENOMIC DNA]</scope>
    <source>
        <strain>Pestoides F</strain>
    </source>
</reference>
<keyword id="KW-0997">Cell inner membrane</keyword>
<keyword id="KW-1003">Cell membrane</keyword>
<keyword id="KW-0472">Membrane</keyword>
<keyword id="KW-0812">Transmembrane</keyword>
<keyword id="KW-1133">Transmembrane helix</keyword>
<gene>
    <name type="ordered locus">YPDSF_1972</name>
</gene>